<organism>
    <name type="scientific">Homo sapiens</name>
    <name type="common">Human</name>
    <dbReference type="NCBI Taxonomy" id="9606"/>
    <lineage>
        <taxon>Eukaryota</taxon>
        <taxon>Metazoa</taxon>
        <taxon>Chordata</taxon>
        <taxon>Craniata</taxon>
        <taxon>Vertebrata</taxon>
        <taxon>Euteleostomi</taxon>
        <taxon>Mammalia</taxon>
        <taxon>Eutheria</taxon>
        <taxon>Euarchontoglires</taxon>
        <taxon>Primates</taxon>
        <taxon>Haplorrhini</taxon>
        <taxon>Catarrhini</taxon>
        <taxon>Hominidae</taxon>
        <taxon>Homo</taxon>
    </lineage>
</organism>
<keyword id="KW-0025">Alternative splicing</keyword>
<keyword id="KW-0597">Phosphoprotein</keyword>
<keyword id="KW-1267">Proteomics identification</keyword>
<keyword id="KW-1185">Reference proteome</keyword>
<reference key="1">
    <citation type="journal article" date="2004" name="Nat. Genet.">
        <title>Complete sequencing and characterization of 21,243 full-length human cDNAs.</title>
        <authorList>
            <person name="Ota T."/>
            <person name="Suzuki Y."/>
            <person name="Nishikawa T."/>
            <person name="Otsuki T."/>
            <person name="Sugiyama T."/>
            <person name="Irie R."/>
            <person name="Wakamatsu A."/>
            <person name="Hayashi K."/>
            <person name="Sato H."/>
            <person name="Nagai K."/>
            <person name="Kimura K."/>
            <person name="Makita H."/>
            <person name="Sekine M."/>
            <person name="Obayashi M."/>
            <person name="Nishi T."/>
            <person name="Shibahara T."/>
            <person name="Tanaka T."/>
            <person name="Ishii S."/>
            <person name="Yamamoto J."/>
            <person name="Saito K."/>
            <person name="Kawai Y."/>
            <person name="Isono Y."/>
            <person name="Nakamura Y."/>
            <person name="Nagahari K."/>
            <person name="Murakami K."/>
            <person name="Yasuda T."/>
            <person name="Iwayanagi T."/>
            <person name="Wagatsuma M."/>
            <person name="Shiratori A."/>
            <person name="Sudo H."/>
            <person name="Hosoiri T."/>
            <person name="Kaku Y."/>
            <person name="Kodaira H."/>
            <person name="Kondo H."/>
            <person name="Sugawara M."/>
            <person name="Takahashi M."/>
            <person name="Kanda K."/>
            <person name="Yokoi T."/>
            <person name="Furuya T."/>
            <person name="Kikkawa E."/>
            <person name="Omura Y."/>
            <person name="Abe K."/>
            <person name="Kamihara K."/>
            <person name="Katsuta N."/>
            <person name="Sato K."/>
            <person name="Tanikawa M."/>
            <person name="Yamazaki M."/>
            <person name="Ninomiya K."/>
            <person name="Ishibashi T."/>
            <person name="Yamashita H."/>
            <person name="Murakawa K."/>
            <person name="Fujimori K."/>
            <person name="Tanai H."/>
            <person name="Kimata M."/>
            <person name="Watanabe M."/>
            <person name="Hiraoka S."/>
            <person name="Chiba Y."/>
            <person name="Ishida S."/>
            <person name="Ono Y."/>
            <person name="Takiguchi S."/>
            <person name="Watanabe S."/>
            <person name="Yosida M."/>
            <person name="Hotuta T."/>
            <person name="Kusano J."/>
            <person name="Kanehori K."/>
            <person name="Takahashi-Fujii A."/>
            <person name="Hara H."/>
            <person name="Tanase T.-O."/>
            <person name="Nomura Y."/>
            <person name="Togiya S."/>
            <person name="Komai F."/>
            <person name="Hara R."/>
            <person name="Takeuchi K."/>
            <person name="Arita M."/>
            <person name="Imose N."/>
            <person name="Musashino K."/>
            <person name="Yuuki H."/>
            <person name="Oshima A."/>
            <person name="Sasaki N."/>
            <person name="Aotsuka S."/>
            <person name="Yoshikawa Y."/>
            <person name="Matsunawa H."/>
            <person name="Ichihara T."/>
            <person name="Shiohata N."/>
            <person name="Sano S."/>
            <person name="Moriya S."/>
            <person name="Momiyama H."/>
            <person name="Satoh N."/>
            <person name="Takami S."/>
            <person name="Terashima Y."/>
            <person name="Suzuki O."/>
            <person name="Nakagawa S."/>
            <person name="Senoh A."/>
            <person name="Mizoguchi H."/>
            <person name="Goto Y."/>
            <person name="Shimizu F."/>
            <person name="Wakebe H."/>
            <person name="Hishigaki H."/>
            <person name="Watanabe T."/>
            <person name="Sugiyama A."/>
            <person name="Takemoto M."/>
            <person name="Kawakami B."/>
            <person name="Yamazaki M."/>
            <person name="Watanabe K."/>
            <person name="Kumagai A."/>
            <person name="Itakura S."/>
            <person name="Fukuzumi Y."/>
            <person name="Fujimori Y."/>
            <person name="Komiyama M."/>
            <person name="Tashiro H."/>
            <person name="Tanigami A."/>
            <person name="Fujiwara T."/>
            <person name="Ono T."/>
            <person name="Yamada K."/>
            <person name="Fujii Y."/>
            <person name="Ozaki K."/>
            <person name="Hirao M."/>
            <person name="Ohmori Y."/>
            <person name="Kawabata A."/>
            <person name="Hikiji T."/>
            <person name="Kobatake N."/>
            <person name="Inagaki H."/>
            <person name="Ikema Y."/>
            <person name="Okamoto S."/>
            <person name="Okitani R."/>
            <person name="Kawakami T."/>
            <person name="Noguchi S."/>
            <person name="Itoh T."/>
            <person name="Shigeta K."/>
            <person name="Senba T."/>
            <person name="Matsumura K."/>
            <person name="Nakajima Y."/>
            <person name="Mizuno T."/>
            <person name="Morinaga M."/>
            <person name="Sasaki M."/>
            <person name="Togashi T."/>
            <person name="Oyama M."/>
            <person name="Hata H."/>
            <person name="Watanabe M."/>
            <person name="Komatsu T."/>
            <person name="Mizushima-Sugano J."/>
            <person name="Satoh T."/>
            <person name="Shirai Y."/>
            <person name="Takahashi Y."/>
            <person name="Nakagawa K."/>
            <person name="Okumura K."/>
            <person name="Nagase T."/>
            <person name="Nomura N."/>
            <person name="Kikuchi H."/>
            <person name="Masuho Y."/>
            <person name="Yamashita R."/>
            <person name="Nakai K."/>
            <person name="Yada T."/>
            <person name="Nakamura Y."/>
            <person name="Ohara O."/>
            <person name="Isogai T."/>
            <person name="Sugano S."/>
        </authorList>
    </citation>
    <scope>NUCLEOTIDE SEQUENCE [LARGE SCALE MRNA] (ISOFORM 2)</scope>
    <source>
        <tissue>Hepatoma</tissue>
    </source>
</reference>
<reference key="2">
    <citation type="journal article" date="2007" name="BMC Genomics">
        <title>The full-ORF clone resource of the German cDNA consortium.</title>
        <authorList>
            <person name="Bechtel S."/>
            <person name="Rosenfelder H."/>
            <person name="Duda A."/>
            <person name="Schmidt C.P."/>
            <person name="Ernst U."/>
            <person name="Wellenreuther R."/>
            <person name="Mehrle A."/>
            <person name="Schuster C."/>
            <person name="Bahr A."/>
            <person name="Bloecker H."/>
            <person name="Heubner D."/>
            <person name="Hoerlein A."/>
            <person name="Michel G."/>
            <person name="Wedler H."/>
            <person name="Koehrer K."/>
            <person name="Ottenwaelder B."/>
            <person name="Poustka A."/>
            <person name="Wiemann S."/>
            <person name="Schupp I."/>
        </authorList>
    </citation>
    <scope>NUCLEOTIDE SEQUENCE [LARGE SCALE MRNA] (ISOFORM 1)</scope>
    <source>
        <tissue>Spinal cord</tissue>
    </source>
</reference>
<reference key="3">
    <citation type="journal article" date="2006" name="Nature">
        <title>Analysis of the DNA sequence and duplication history of human chromosome 15.</title>
        <authorList>
            <person name="Zody M.C."/>
            <person name="Garber M."/>
            <person name="Sharpe T."/>
            <person name="Young S.K."/>
            <person name="Rowen L."/>
            <person name="O'Neill K."/>
            <person name="Whittaker C.A."/>
            <person name="Kamal M."/>
            <person name="Chang J.L."/>
            <person name="Cuomo C.A."/>
            <person name="Dewar K."/>
            <person name="FitzGerald M.G."/>
            <person name="Kodira C.D."/>
            <person name="Madan A."/>
            <person name="Qin S."/>
            <person name="Yang X."/>
            <person name="Abbasi N."/>
            <person name="Abouelleil A."/>
            <person name="Arachchi H.M."/>
            <person name="Baradarani L."/>
            <person name="Birditt B."/>
            <person name="Bloom S."/>
            <person name="Bloom T."/>
            <person name="Borowsky M.L."/>
            <person name="Burke J."/>
            <person name="Butler J."/>
            <person name="Cook A."/>
            <person name="DeArellano K."/>
            <person name="DeCaprio D."/>
            <person name="Dorris L. III"/>
            <person name="Dors M."/>
            <person name="Eichler E.E."/>
            <person name="Engels R."/>
            <person name="Fahey J."/>
            <person name="Fleetwood P."/>
            <person name="Friedman C."/>
            <person name="Gearin G."/>
            <person name="Hall J.L."/>
            <person name="Hensley G."/>
            <person name="Johnson E."/>
            <person name="Jones C."/>
            <person name="Kamat A."/>
            <person name="Kaur A."/>
            <person name="Locke D.P."/>
            <person name="Madan A."/>
            <person name="Munson G."/>
            <person name="Jaffe D.B."/>
            <person name="Lui A."/>
            <person name="Macdonald P."/>
            <person name="Mauceli E."/>
            <person name="Naylor J.W."/>
            <person name="Nesbitt R."/>
            <person name="Nicol R."/>
            <person name="O'Leary S.B."/>
            <person name="Ratcliffe A."/>
            <person name="Rounsley S."/>
            <person name="She X."/>
            <person name="Sneddon K.M.B."/>
            <person name="Stewart S."/>
            <person name="Sougnez C."/>
            <person name="Stone S.M."/>
            <person name="Topham K."/>
            <person name="Vincent D."/>
            <person name="Wang S."/>
            <person name="Zimmer A.R."/>
            <person name="Birren B.W."/>
            <person name="Hood L."/>
            <person name="Lander E.S."/>
            <person name="Nusbaum C."/>
        </authorList>
    </citation>
    <scope>NUCLEOTIDE SEQUENCE [LARGE SCALE GENOMIC DNA]</scope>
</reference>
<reference key="4">
    <citation type="journal article" date="2004" name="Genome Res.">
        <title>The status, quality, and expansion of the NIH full-length cDNA project: the Mammalian Gene Collection (MGC).</title>
        <authorList>
            <consortium name="The MGC Project Team"/>
        </authorList>
    </citation>
    <scope>NUCLEOTIDE SEQUENCE [LARGE SCALE MRNA] (ISOFORM 3)</scope>
    <source>
        <tissue>Placenta</tissue>
    </source>
</reference>
<reference key="5">
    <citation type="journal article" date="2010" name="Sci. Signal.">
        <title>Quantitative phosphoproteomics reveals widespread full phosphorylation site occupancy during mitosis.</title>
        <authorList>
            <person name="Olsen J.V."/>
            <person name="Vermeulen M."/>
            <person name="Santamaria A."/>
            <person name="Kumar C."/>
            <person name="Miller M.L."/>
            <person name="Jensen L.J."/>
            <person name="Gnad F."/>
            <person name="Cox J."/>
            <person name="Jensen T.S."/>
            <person name="Nigg E.A."/>
            <person name="Brunak S."/>
            <person name="Mann M."/>
        </authorList>
    </citation>
    <scope>IDENTIFICATION BY MASS SPECTROMETRY [LARGE SCALE ANALYSIS]</scope>
    <source>
        <tissue>Cervix carcinoma</tissue>
    </source>
</reference>
<reference key="6">
    <citation type="journal article" date="2011" name="Sci. Signal.">
        <title>System-wide temporal characterization of the proteome and phosphoproteome of human embryonic stem cell differentiation.</title>
        <authorList>
            <person name="Rigbolt K.T."/>
            <person name="Prokhorova T.A."/>
            <person name="Akimov V."/>
            <person name="Henningsen J."/>
            <person name="Johansen P.T."/>
            <person name="Kratchmarova I."/>
            <person name="Kassem M."/>
            <person name="Mann M."/>
            <person name="Olsen J.V."/>
            <person name="Blagoev B."/>
        </authorList>
    </citation>
    <scope>IDENTIFICATION BY MASS SPECTROMETRY [LARGE SCALE ANALYSIS]</scope>
</reference>
<reference key="7">
    <citation type="journal article" date="2014" name="J. Proteomics">
        <title>An enzyme assisted RP-RPLC approach for in-depth analysis of human liver phosphoproteome.</title>
        <authorList>
            <person name="Bian Y."/>
            <person name="Song C."/>
            <person name="Cheng K."/>
            <person name="Dong M."/>
            <person name="Wang F."/>
            <person name="Huang J."/>
            <person name="Sun D."/>
            <person name="Wang L."/>
            <person name="Ye M."/>
            <person name="Zou H."/>
        </authorList>
    </citation>
    <scope>PHOSPHORYLATION [LARGE SCALE ANALYSIS] AT SER-607 AND SER-751</scope>
    <scope>IDENTIFICATION BY MASS SPECTROMETRY [LARGE SCALE ANALYSIS]</scope>
    <source>
        <tissue>Liver</tissue>
    </source>
</reference>
<accession>Q9NXD2</accession>
<accession>Q6P4Q6</accession>
<gene>
    <name type="primary">MTMR10</name>
</gene>
<protein>
    <recommendedName>
        <fullName>Myotubularin-related protein 10</fullName>
    </recommendedName>
    <alternativeName>
        <fullName evidence="5">Inactive phosphatidylinositol 3-phosphatase 10</fullName>
    </alternativeName>
</protein>
<evidence type="ECO:0000255" key="1">
    <source>
        <dbReference type="PROSITE-ProRule" id="PRU00669"/>
    </source>
</evidence>
<evidence type="ECO:0000256" key="2">
    <source>
        <dbReference type="SAM" id="MobiDB-lite"/>
    </source>
</evidence>
<evidence type="ECO:0000303" key="3">
    <source>
    </source>
</evidence>
<evidence type="ECO:0000303" key="4">
    <source>
    </source>
</evidence>
<evidence type="ECO:0000305" key="5"/>
<evidence type="ECO:0007744" key="6">
    <source>
    </source>
</evidence>
<comment type="alternative products">
    <event type="alternative splicing"/>
    <isoform>
        <id>Q9NXD2-1</id>
        <name>1</name>
        <sequence type="displayed"/>
    </isoform>
    <isoform>
        <id>Q9NXD2-2</id>
        <name>2</name>
        <sequence type="described" ref="VSP_035774 VSP_024467 VSP_024468"/>
    </isoform>
    <isoform>
        <id>Q9NXD2-3</id>
        <name>3</name>
        <sequence type="described" ref="VSP_024465 VSP_024466"/>
    </isoform>
</comment>
<comment type="miscellaneous">
    <molecule>Isoform 3</molecule>
    <text evidence="5">May be produced at very low levels due to a premature stop codon in the mRNA, leading to nonsense-mediated mRNA decay.</text>
</comment>
<comment type="similarity">
    <text evidence="5">Belongs to the protein-tyrosine phosphatase family. Non-receptor class myotubularin subfamily.</text>
</comment>
<comment type="caution">
    <text evidence="5">Although it belongs to the non-receptor class myotubularin subfamily, lacks the conserved active site cysteine residue at position 403 in the dsPTPase catalytic loop, suggesting that it has no phosphatase activity.</text>
</comment>
<feature type="chain" id="PRO_0000284360" description="Myotubularin-related protein 10">
    <location>
        <begin position="1"/>
        <end position="777"/>
    </location>
</feature>
<feature type="domain" description="Myotubularin phosphatase" evidence="1">
    <location>
        <begin position="221"/>
        <end position="661"/>
    </location>
</feature>
<feature type="region of interest" description="Disordered" evidence="2">
    <location>
        <begin position="196"/>
        <end position="217"/>
    </location>
</feature>
<feature type="compositionally biased region" description="Gly residues" evidence="2">
    <location>
        <begin position="197"/>
        <end position="214"/>
    </location>
</feature>
<feature type="modified residue" description="Phosphoserine" evidence="6">
    <location>
        <position position="607"/>
    </location>
</feature>
<feature type="modified residue" description="Phosphoserine" evidence="6">
    <location>
        <position position="751"/>
    </location>
</feature>
<feature type="splice variant" id="VSP_035774" description="In isoform 2." evidence="3">
    <location>
        <begin position="1"/>
        <end position="82"/>
    </location>
</feature>
<feature type="splice variant" id="VSP_024465" description="In isoform 3." evidence="4">
    <original>VCLAIAHYSQPTDLQLLFAFEYVGKKYHNSANKINGIPSGDGGGGGGGGNGAGGGSSQKT</original>
    <variation>QTKLMEFPQEMEEEEEEEVMELVVAAARKLHSLKLTRIGTEKSRGQVLPGGEFVLLTRVT</variation>
    <location>
        <begin position="159"/>
        <end position="218"/>
    </location>
</feature>
<feature type="splice variant" id="VSP_024466" description="In isoform 3." evidence="4">
    <location>
        <begin position="219"/>
        <end position="777"/>
    </location>
</feature>
<feature type="splice variant" id="VSP_024467" description="In isoform 2." evidence="3">
    <original>EFAISKNIQLGDEKGLK</original>
    <variation>VSRIKSCTKQDYFPSRV</variation>
    <location>
        <begin position="517"/>
        <end position="533"/>
    </location>
</feature>
<feature type="splice variant" id="VSP_024468" description="In isoform 2." evidence="3">
    <location>
        <begin position="534"/>
        <end position="777"/>
    </location>
</feature>
<feature type="sequence variant" id="VAR_047539" description="In dbSNP:rs6493352.">
    <original>R</original>
    <variation>H</variation>
    <location>
        <position position="648"/>
    </location>
</feature>
<feature type="sequence conflict" description="In Ref. 2; AL832603." evidence="5" ref="2">
    <original>V</original>
    <variation>I</variation>
    <location>
        <position position="342"/>
    </location>
</feature>
<feature type="sequence conflict" description="In Ref. 2; AL832603." evidence="5" ref="2">
    <original>E</original>
    <variation>G</variation>
    <location>
        <position position="710"/>
    </location>
</feature>
<proteinExistence type="evidence at protein level"/>
<name>MTMRA_HUMAN</name>
<sequence>MFSLKPPKPTFRSYLLPPPQTDDKINSEPKIKKLEPVLLPGEIVVNEVNFVRKCIATDTSQYDLWGKLICSNFKISFITDDPMPLQKFHYRNLLLGEHDVPLTCIEQIVTVNDHKRKQKVLGPNQKLKFNPTELIIYCKDFRIVRFRFDESGPESAKKVCLAIAHYSQPTDLQLLFAFEYVGKKYHNSANKINGIPSGDGGGGGGGGNGAGGGSSQKTPLFETYSDWDREIKRTGASGWRVCSINEGYMISTCLPEYIVVPSSLADQDLKIFSHSFVGRRMPLWCWSHSNGSALVRMALIKDVLQQRKIDQRICNAITKSHPQRSDVYKSDLDKTLPNIQEVQAAFVKLKQLCVNEPFEETEEKWLSSLENTRWLEYVRAFLKHSAELVYMLESKHLSVVLQEEEGRDLSCCVASLVQVMLDPYFRTITGFQSLIQKEWVMAGYQFLDRCNHLKRSEKESPLFLLFLDATWQLLEQYPAAFEFSETYLAVLYDSTRISLFGTFLFNSPHQRVKQSTEFAISKNIQLGDEKGLKFPSVWDWSLQFTAKDRTLFHNPFYIGKSTPCIQNGSVKSFKRTKKSYSSTLRGMPSALKNGIISDQELLPRRNSLILKPKPDPAQQTDSQNSDTEQYFREWFSKPANLHGVILPRVSGTHIKLWKLCYFRWVPEAQISLGGSITAFHKLSLLADEVDVLSRMLRQQRSGPLEACYGELGQSRMYFNASGPHHTDTSGTPEFLSSSFPFSPVGNLCRRSILGTPLSKFLSGAKIWLSTETLANED</sequence>
<dbReference type="EMBL" id="AK000320">
    <property type="protein sequence ID" value="BAA91083.1"/>
    <property type="molecule type" value="mRNA"/>
</dbReference>
<dbReference type="EMBL" id="AL832603">
    <property type="status" value="NOT_ANNOTATED_CDS"/>
    <property type="molecule type" value="mRNA"/>
</dbReference>
<dbReference type="EMBL" id="AC090829">
    <property type="status" value="NOT_ANNOTATED_CDS"/>
    <property type="molecule type" value="Genomic_DNA"/>
</dbReference>
<dbReference type="EMBL" id="BC063296">
    <property type="status" value="NOT_ANNOTATED_CDS"/>
    <property type="molecule type" value="mRNA"/>
</dbReference>
<dbReference type="CCDS" id="CCDS45204.1">
    <molecule id="Q9NXD2-1"/>
</dbReference>
<dbReference type="RefSeq" id="NP_060232.2">
    <molecule id="Q9NXD2-1"/>
    <property type="nucleotide sequence ID" value="NM_017762.3"/>
</dbReference>
<dbReference type="SMR" id="Q9NXD2"/>
<dbReference type="BioGRID" id="120240">
    <property type="interactions" value="46"/>
</dbReference>
<dbReference type="FunCoup" id="Q9NXD2">
    <property type="interactions" value="2586"/>
</dbReference>
<dbReference type="IntAct" id="Q9NXD2">
    <property type="interactions" value="30"/>
</dbReference>
<dbReference type="MINT" id="Q9NXD2"/>
<dbReference type="STRING" id="9606.ENSP00000402537"/>
<dbReference type="DEPOD" id="MTMR10"/>
<dbReference type="GlyGen" id="Q9NXD2">
    <property type="glycosylation" value="3 sites, 1 N-linked glycan (1 site), 1 O-linked glycan (2 sites)"/>
</dbReference>
<dbReference type="iPTMnet" id="Q9NXD2"/>
<dbReference type="PhosphoSitePlus" id="Q9NXD2"/>
<dbReference type="BioMuta" id="MTMR10"/>
<dbReference type="DMDM" id="215274131"/>
<dbReference type="jPOST" id="Q9NXD2"/>
<dbReference type="MassIVE" id="Q9NXD2"/>
<dbReference type="PaxDb" id="9606-ENSP00000402537"/>
<dbReference type="PeptideAtlas" id="Q9NXD2"/>
<dbReference type="ProteomicsDB" id="83076">
    <molecule id="Q9NXD2-1"/>
</dbReference>
<dbReference type="ProteomicsDB" id="83077">
    <molecule id="Q9NXD2-2"/>
</dbReference>
<dbReference type="ProteomicsDB" id="83078">
    <molecule id="Q9NXD2-3"/>
</dbReference>
<dbReference type="Pumba" id="Q9NXD2"/>
<dbReference type="Antibodypedia" id="65234">
    <property type="antibodies" value="29 antibodies from 12 providers"/>
</dbReference>
<dbReference type="DNASU" id="54893"/>
<dbReference type="Ensembl" id="ENST00000435680.6">
    <molecule id="Q9NXD2-1"/>
    <property type="protein sequence ID" value="ENSP00000402537.1"/>
    <property type="gene ID" value="ENSG00000166912.17"/>
</dbReference>
<dbReference type="Ensembl" id="ENST00000563714.5">
    <molecule id="Q9NXD2-2"/>
    <property type="protein sequence ID" value="ENSP00000457390.1"/>
    <property type="gene ID" value="ENSG00000166912.17"/>
</dbReference>
<dbReference type="Ensembl" id="ENST00000568604.5">
    <molecule id="Q9NXD2-3"/>
    <property type="protein sequence ID" value="ENSP00000457903.1"/>
    <property type="gene ID" value="ENSG00000166912.17"/>
</dbReference>
<dbReference type="Ensembl" id="ENST00000621195.3">
    <molecule id="Q9NXD2-1"/>
    <property type="protein sequence ID" value="ENSP00000484437.1"/>
    <property type="gene ID" value="ENSG00000277086.3"/>
</dbReference>
<dbReference type="GeneID" id="54893"/>
<dbReference type="KEGG" id="hsa:54893"/>
<dbReference type="MANE-Select" id="ENST00000435680.6">
    <property type="protein sequence ID" value="ENSP00000402537.1"/>
    <property type="RefSeq nucleotide sequence ID" value="NM_017762.3"/>
    <property type="RefSeq protein sequence ID" value="NP_060232.2"/>
</dbReference>
<dbReference type="UCSC" id="uc001zfj.3">
    <molecule id="Q9NXD2-1"/>
    <property type="organism name" value="human"/>
</dbReference>
<dbReference type="AGR" id="HGNC:25999"/>
<dbReference type="CTD" id="54893"/>
<dbReference type="DisGeNET" id="54893"/>
<dbReference type="GeneCards" id="MTMR10"/>
<dbReference type="HGNC" id="HGNC:25999">
    <property type="gene designation" value="MTMR10"/>
</dbReference>
<dbReference type="HPA" id="ENSG00000166912">
    <property type="expression patterns" value="Tissue enhanced (brain)"/>
</dbReference>
<dbReference type="MalaCards" id="MTMR10"/>
<dbReference type="neXtProt" id="NX_Q9NXD2"/>
<dbReference type="OpenTargets" id="ENSG00000166912"/>
<dbReference type="PharmGKB" id="PA128394676"/>
<dbReference type="VEuPathDB" id="HostDB:ENSG00000166912"/>
<dbReference type="eggNOG" id="KOG1089">
    <property type="taxonomic scope" value="Eukaryota"/>
</dbReference>
<dbReference type="GeneTree" id="ENSGT00940000156900"/>
<dbReference type="HOGENOM" id="CLU_021912_1_0_1"/>
<dbReference type="InParanoid" id="Q9NXD2"/>
<dbReference type="OMA" id="SVPQDRF"/>
<dbReference type="OrthoDB" id="271628at2759"/>
<dbReference type="PAN-GO" id="Q9NXD2">
    <property type="GO annotations" value="4 GO annotations based on evolutionary models"/>
</dbReference>
<dbReference type="PhylomeDB" id="Q9NXD2"/>
<dbReference type="TreeFam" id="TF315197"/>
<dbReference type="PathwayCommons" id="Q9NXD2"/>
<dbReference type="Reactome" id="R-HSA-1660516">
    <property type="pathway name" value="Synthesis of PIPs at the early endosome membrane"/>
</dbReference>
<dbReference type="SignaLink" id="Q9NXD2"/>
<dbReference type="BioGRID-ORCS" id="54893">
    <property type="hits" value="17 hits in 1173 CRISPR screens"/>
</dbReference>
<dbReference type="ChiTaRS" id="MTMR10">
    <property type="organism name" value="human"/>
</dbReference>
<dbReference type="GenomeRNAi" id="54893"/>
<dbReference type="Pharos" id="Q9NXD2">
    <property type="development level" value="Tdark"/>
</dbReference>
<dbReference type="PRO" id="PR:Q9NXD2"/>
<dbReference type="Proteomes" id="UP000005640">
    <property type="component" value="Chromosome 15"/>
</dbReference>
<dbReference type="RNAct" id="Q9NXD2">
    <property type="molecule type" value="protein"/>
</dbReference>
<dbReference type="Bgee" id="ENSG00000166912">
    <property type="expression patterns" value="Expressed in corpus callosum and 188 other cell types or tissues"/>
</dbReference>
<dbReference type="ExpressionAtlas" id="Q9NXD2">
    <property type="expression patterns" value="baseline and differential"/>
</dbReference>
<dbReference type="GO" id="GO:0005737">
    <property type="term" value="C:cytoplasm"/>
    <property type="evidence" value="ECO:0000314"/>
    <property type="project" value="UniProtKB"/>
</dbReference>
<dbReference type="GO" id="GO:0005829">
    <property type="term" value="C:cytosol"/>
    <property type="evidence" value="ECO:0000304"/>
    <property type="project" value="Reactome"/>
</dbReference>
<dbReference type="GO" id="GO:0016020">
    <property type="term" value="C:membrane"/>
    <property type="evidence" value="ECO:0000318"/>
    <property type="project" value="GO_Central"/>
</dbReference>
<dbReference type="GO" id="GO:0004438">
    <property type="term" value="F:phosphatidylinositol-3-phosphate phosphatase activity"/>
    <property type="evidence" value="ECO:0000318"/>
    <property type="project" value="GO_Central"/>
</dbReference>
<dbReference type="GO" id="GO:0046856">
    <property type="term" value="P:phosphatidylinositol dephosphorylation"/>
    <property type="evidence" value="ECO:0000318"/>
    <property type="project" value="GO_Central"/>
</dbReference>
<dbReference type="CDD" id="cd13346">
    <property type="entry name" value="PH-GRAM_MTMR10"/>
    <property type="match status" value="1"/>
</dbReference>
<dbReference type="CDD" id="cd14593">
    <property type="entry name" value="PTP-MTMR10"/>
    <property type="match status" value="1"/>
</dbReference>
<dbReference type="FunFam" id="2.30.29.30:FF:000198">
    <property type="entry name" value="Myotubularin related protein 10"/>
    <property type="match status" value="1"/>
</dbReference>
<dbReference type="Gene3D" id="2.30.29.30">
    <property type="entry name" value="Pleckstrin-homology domain (PH domain)/Phosphotyrosine-binding domain (PTB)"/>
    <property type="match status" value="1"/>
</dbReference>
<dbReference type="InterPro" id="IPR036004">
    <property type="entry name" value="MTMR10_PH-GRAM"/>
</dbReference>
<dbReference type="InterPro" id="IPR030573">
    <property type="entry name" value="MTMR10_PTP"/>
</dbReference>
<dbReference type="InterPro" id="IPR022587">
    <property type="entry name" value="MTMR12-like_C"/>
</dbReference>
<dbReference type="InterPro" id="IPR030564">
    <property type="entry name" value="Myotubularin"/>
</dbReference>
<dbReference type="InterPro" id="IPR010569">
    <property type="entry name" value="Myotubularin-like_Pase_dom"/>
</dbReference>
<dbReference type="InterPro" id="IPR011993">
    <property type="entry name" value="PH-like_dom_sf"/>
</dbReference>
<dbReference type="InterPro" id="IPR029021">
    <property type="entry name" value="Prot-tyrosine_phosphatase-like"/>
</dbReference>
<dbReference type="PANTHER" id="PTHR10807">
    <property type="entry name" value="MYOTUBULARIN-RELATED"/>
    <property type="match status" value="1"/>
</dbReference>
<dbReference type="PANTHER" id="PTHR10807:SF39">
    <property type="entry name" value="MYOTUBULARIN-RELATED PROTEIN 10"/>
    <property type="match status" value="1"/>
</dbReference>
<dbReference type="Pfam" id="PF12578">
    <property type="entry name" value="3-PAP"/>
    <property type="match status" value="1"/>
</dbReference>
<dbReference type="Pfam" id="PF06602">
    <property type="entry name" value="Myotub-related"/>
    <property type="match status" value="2"/>
</dbReference>
<dbReference type="SUPFAM" id="SSF52799">
    <property type="entry name" value="(Phosphotyrosine protein) phosphatases II"/>
    <property type="match status" value="1"/>
</dbReference>
<dbReference type="SUPFAM" id="SSF50729">
    <property type="entry name" value="PH domain-like"/>
    <property type="match status" value="1"/>
</dbReference>
<dbReference type="PROSITE" id="PS51339">
    <property type="entry name" value="PPASE_MYOTUBULARIN"/>
    <property type="match status" value="1"/>
</dbReference>